<accession>B1XBX6</accession>
<name>TRMA_ECODH</name>
<protein>
    <recommendedName>
        <fullName evidence="1">tRNA/tmRNA (uracil-C(5))-methyltransferase</fullName>
        <ecNumber evidence="1">2.1.1.-</ecNumber>
        <ecNumber evidence="1">2.1.1.35</ecNumber>
    </recommendedName>
    <alternativeName>
        <fullName evidence="1">tRNA (uracil(54)-C(5))-methyltransferase</fullName>
    </alternativeName>
    <alternativeName>
        <fullName evidence="1">tRNA(m5U54)-methyltransferase</fullName>
        <shortName evidence="1">RUMT</shortName>
    </alternativeName>
    <alternativeName>
        <fullName evidence="1">tmRNA (uracil(341)-C(5))-methyltransferase</fullName>
    </alternativeName>
</protein>
<evidence type="ECO:0000255" key="1">
    <source>
        <dbReference type="HAMAP-Rule" id="MF_01011"/>
    </source>
</evidence>
<dbReference type="EC" id="2.1.1.-" evidence="1"/>
<dbReference type="EC" id="2.1.1.35" evidence="1"/>
<dbReference type="EMBL" id="CP000948">
    <property type="protein sequence ID" value="ACB04976.1"/>
    <property type="molecule type" value="Genomic_DNA"/>
</dbReference>
<dbReference type="RefSeq" id="WP_000187022.1">
    <property type="nucleotide sequence ID" value="NC_010473.1"/>
</dbReference>
<dbReference type="SMR" id="B1XBX6"/>
<dbReference type="GeneID" id="75203203"/>
<dbReference type="KEGG" id="ecd:ECDH10B_4154"/>
<dbReference type="HOGENOM" id="CLU_043022_0_0_6"/>
<dbReference type="GO" id="GO:0005829">
    <property type="term" value="C:cytosol"/>
    <property type="evidence" value="ECO:0007669"/>
    <property type="project" value="TreeGrafter"/>
</dbReference>
<dbReference type="GO" id="GO:0019843">
    <property type="term" value="F:rRNA binding"/>
    <property type="evidence" value="ECO:0007669"/>
    <property type="project" value="TreeGrafter"/>
</dbReference>
<dbReference type="GO" id="GO:0030697">
    <property type="term" value="F:tRNA (uracil(54)-C5)-methyltransferase activity, S-adenosyl methionine-dependent"/>
    <property type="evidence" value="ECO:0007669"/>
    <property type="project" value="UniProtKB-UniRule"/>
</dbReference>
<dbReference type="GO" id="GO:0000049">
    <property type="term" value="F:tRNA binding"/>
    <property type="evidence" value="ECO:0007669"/>
    <property type="project" value="TreeGrafter"/>
</dbReference>
<dbReference type="GO" id="GO:0030488">
    <property type="term" value="P:tRNA methylation"/>
    <property type="evidence" value="ECO:0007669"/>
    <property type="project" value="UniProtKB-UniRule"/>
</dbReference>
<dbReference type="CDD" id="cd02440">
    <property type="entry name" value="AdoMet_MTases"/>
    <property type="match status" value="1"/>
</dbReference>
<dbReference type="FunFam" id="2.40.50.1070:FF:000001">
    <property type="entry name" value="tRNA/tmRNA (uracil-C(5))-methyltransferase"/>
    <property type="match status" value="1"/>
</dbReference>
<dbReference type="FunFam" id="3.40.50.150:FF:000012">
    <property type="entry name" value="tRNA/tmRNA (uracil-C(5))-methyltransferase"/>
    <property type="match status" value="1"/>
</dbReference>
<dbReference type="Gene3D" id="2.40.50.1070">
    <property type="match status" value="1"/>
</dbReference>
<dbReference type="Gene3D" id="3.40.50.150">
    <property type="entry name" value="Vaccinia Virus protein VP39"/>
    <property type="match status" value="1"/>
</dbReference>
<dbReference type="HAMAP" id="MF_01011">
    <property type="entry name" value="RNA_methyltr_TrmA"/>
    <property type="match status" value="1"/>
</dbReference>
<dbReference type="InterPro" id="IPR030390">
    <property type="entry name" value="MeTrfase_TrmA_AS"/>
</dbReference>
<dbReference type="InterPro" id="IPR030391">
    <property type="entry name" value="MeTrfase_TrmA_CS"/>
</dbReference>
<dbReference type="InterPro" id="IPR029063">
    <property type="entry name" value="SAM-dependent_MTases_sf"/>
</dbReference>
<dbReference type="InterPro" id="IPR011869">
    <property type="entry name" value="TrmA_MeTrfase"/>
</dbReference>
<dbReference type="InterPro" id="IPR010280">
    <property type="entry name" value="U5_MeTrfase_fam"/>
</dbReference>
<dbReference type="NCBIfam" id="TIGR02143">
    <property type="entry name" value="trmA_only"/>
    <property type="match status" value="1"/>
</dbReference>
<dbReference type="PANTHER" id="PTHR47790">
    <property type="entry name" value="TRNA/TMRNA (URACIL-C(5))-METHYLTRANSFERASE"/>
    <property type="match status" value="1"/>
</dbReference>
<dbReference type="PANTHER" id="PTHR47790:SF2">
    <property type="entry name" value="TRNA_TMRNA (URACIL-C(5))-METHYLTRANSFERASE"/>
    <property type="match status" value="1"/>
</dbReference>
<dbReference type="Pfam" id="PF05958">
    <property type="entry name" value="tRNA_U5-meth_tr"/>
    <property type="match status" value="1"/>
</dbReference>
<dbReference type="SUPFAM" id="SSF53335">
    <property type="entry name" value="S-adenosyl-L-methionine-dependent methyltransferases"/>
    <property type="match status" value="1"/>
</dbReference>
<dbReference type="PROSITE" id="PS51687">
    <property type="entry name" value="SAM_MT_RNA_M5U"/>
    <property type="match status" value="1"/>
</dbReference>
<dbReference type="PROSITE" id="PS01230">
    <property type="entry name" value="TRMA_1"/>
    <property type="match status" value="1"/>
</dbReference>
<dbReference type="PROSITE" id="PS01231">
    <property type="entry name" value="TRMA_2"/>
    <property type="match status" value="1"/>
</dbReference>
<gene>
    <name evidence="1" type="primary">trmA</name>
    <name type="ordered locus">ECDH10B_4154</name>
</gene>
<organism>
    <name type="scientific">Escherichia coli (strain K12 / DH10B)</name>
    <dbReference type="NCBI Taxonomy" id="316385"/>
    <lineage>
        <taxon>Bacteria</taxon>
        <taxon>Pseudomonadati</taxon>
        <taxon>Pseudomonadota</taxon>
        <taxon>Gammaproteobacteria</taxon>
        <taxon>Enterobacterales</taxon>
        <taxon>Enterobacteriaceae</taxon>
        <taxon>Escherichia</taxon>
    </lineage>
</organism>
<reference key="1">
    <citation type="journal article" date="2008" name="J. Bacteriol.">
        <title>The complete genome sequence of Escherichia coli DH10B: insights into the biology of a laboratory workhorse.</title>
        <authorList>
            <person name="Durfee T."/>
            <person name="Nelson R."/>
            <person name="Baldwin S."/>
            <person name="Plunkett G. III"/>
            <person name="Burland V."/>
            <person name="Mau B."/>
            <person name="Petrosino J.F."/>
            <person name="Qin X."/>
            <person name="Muzny D.M."/>
            <person name="Ayele M."/>
            <person name="Gibbs R.A."/>
            <person name="Csorgo B."/>
            <person name="Posfai G."/>
            <person name="Weinstock G.M."/>
            <person name="Blattner F.R."/>
        </authorList>
    </citation>
    <scope>NUCLEOTIDE SEQUENCE [LARGE SCALE GENOMIC DNA]</scope>
    <source>
        <strain>K12 / DH10B</strain>
    </source>
</reference>
<comment type="function">
    <text evidence="1">Dual-specificity methyltransferase that catalyzes the formation of 5-methyluridine at position 54 (m5U54) in all tRNAs, and that of position 341 (m5U341) in tmRNA (transfer-mRNA).</text>
</comment>
<comment type="catalytic activity">
    <reaction evidence="1">
        <text>uridine(54) in tRNA + S-adenosyl-L-methionine = 5-methyluridine(54) in tRNA + S-adenosyl-L-homocysteine + H(+)</text>
        <dbReference type="Rhea" id="RHEA:42712"/>
        <dbReference type="Rhea" id="RHEA-COMP:10167"/>
        <dbReference type="Rhea" id="RHEA-COMP:10193"/>
        <dbReference type="ChEBI" id="CHEBI:15378"/>
        <dbReference type="ChEBI" id="CHEBI:57856"/>
        <dbReference type="ChEBI" id="CHEBI:59789"/>
        <dbReference type="ChEBI" id="CHEBI:65315"/>
        <dbReference type="ChEBI" id="CHEBI:74447"/>
        <dbReference type="EC" id="2.1.1.35"/>
    </reaction>
</comment>
<comment type="catalytic activity">
    <reaction evidence="1">
        <text>uridine(341) in tmRNA + S-adenosyl-L-methionine = 5-methyluridine(341) in tmRNA + S-adenosyl-L-homocysteine + H(+)</text>
        <dbReference type="Rhea" id="RHEA:43612"/>
        <dbReference type="Rhea" id="RHEA-COMP:10630"/>
        <dbReference type="Rhea" id="RHEA-COMP:10631"/>
        <dbReference type="ChEBI" id="CHEBI:15378"/>
        <dbReference type="ChEBI" id="CHEBI:57856"/>
        <dbReference type="ChEBI" id="CHEBI:59789"/>
        <dbReference type="ChEBI" id="CHEBI:65315"/>
        <dbReference type="ChEBI" id="CHEBI:74447"/>
    </reaction>
</comment>
<comment type="similarity">
    <text evidence="1">Belongs to the class I-like SAM-binding methyltransferase superfamily. RNA M5U methyltransferase family. TrmA subfamily.</text>
</comment>
<keyword id="KW-0489">Methyltransferase</keyword>
<keyword id="KW-0949">S-adenosyl-L-methionine</keyword>
<keyword id="KW-0808">Transferase</keyword>
<keyword id="KW-0819">tRNA processing</keyword>
<proteinExistence type="inferred from homology"/>
<sequence>MTPEHLPTEQYEAQLAEKVVRLQSMMAPFSDLVPEVFRSPVSHYRMRAEFRIWHDGDDLYHIIFDQQTKSRIRVDSFPAASELINQLMTAMIAGVRNNPVLRHKLFQIDYLTTLSNQAVVSLLYHKKLDDEWRQEAEALRDALRAQNLNVHLIGRATKTKIELDQDYIDERLPVAGKEMIYRQVENSFTQPNAAMNIQMLEWALDVTKGSKGDLLELYCGNGNFSLALARNFDRVLATEIAKPSVAAAQYNIAANHIDNVQIIRMAAEEFTQAMNGVREFNRLQGIDLKSYQCETIFVDPPRSGLDSETEKMVQAYPRILYISCNPETLCKNLETLSQTHKVERLALFDQFPYTHHMECGVLLTAK</sequence>
<feature type="chain" id="PRO_1000198538" description="tRNA/tmRNA (uracil-C(5))-methyltransferase">
    <location>
        <begin position="1"/>
        <end position="366"/>
    </location>
</feature>
<feature type="active site" description="Nucleophile" evidence="1">
    <location>
        <position position="324"/>
    </location>
</feature>
<feature type="active site" description="Proton acceptor" evidence="1">
    <location>
        <position position="358"/>
    </location>
</feature>
<feature type="binding site" evidence="1">
    <location>
        <position position="190"/>
    </location>
    <ligand>
        <name>S-adenosyl-L-methionine</name>
        <dbReference type="ChEBI" id="CHEBI:59789"/>
    </ligand>
</feature>
<feature type="binding site" evidence="1">
    <location>
        <position position="218"/>
    </location>
    <ligand>
        <name>S-adenosyl-L-methionine</name>
        <dbReference type="ChEBI" id="CHEBI:59789"/>
    </ligand>
</feature>
<feature type="binding site" evidence="1">
    <location>
        <position position="223"/>
    </location>
    <ligand>
        <name>S-adenosyl-L-methionine</name>
        <dbReference type="ChEBI" id="CHEBI:59789"/>
    </ligand>
</feature>
<feature type="binding site" evidence="1">
    <location>
        <position position="239"/>
    </location>
    <ligand>
        <name>S-adenosyl-L-methionine</name>
        <dbReference type="ChEBI" id="CHEBI:59789"/>
    </ligand>
</feature>
<feature type="binding site" evidence="1">
    <location>
        <position position="299"/>
    </location>
    <ligand>
        <name>S-adenosyl-L-methionine</name>
        <dbReference type="ChEBI" id="CHEBI:59789"/>
    </ligand>
</feature>